<comment type="function">
    <text evidence="1">Binds 23S rRNA and is also seen to make contacts with the A and possibly P site tRNAs.</text>
</comment>
<comment type="subunit">
    <text evidence="1">Part of the 50S ribosomal subunit.</text>
</comment>
<comment type="similarity">
    <text evidence="1">Belongs to the universal ribosomal protein uL16 family.</text>
</comment>
<accession>A7HZL3</accession>
<sequence>MLMPKKTKYSKMMKGRNRGYAVRGIKLNFGDYGIKAVEAGRINSNQIEAARIAMTRYVNREAKVWINVFPDKPLTKKPLQTRMGKGKTGVEEWVMNIKPGRIIFELTGVNEDVARRALELSMHKLPFKTKIVTRESENEIY</sequence>
<feature type="chain" id="PRO_1000054599" description="Large ribosomal subunit protein uL16">
    <location>
        <begin position="1"/>
        <end position="141"/>
    </location>
</feature>
<keyword id="KW-1185">Reference proteome</keyword>
<keyword id="KW-0687">Ribonucleoprotein</keyword>
<keyword id="KW-0689">Ribosomal protein</keyword>
<keyword id="KW-0694">RNA-binding</keyword>
<keyword id="KW-0699">rRNA-binding</keyword>
<keyword id="KW-0820">tRNA-binding</keyword>
<proteinExistence type="inferred from homology"/>
<protein>
    <recommendedName>
        <fullName evidence="1">Large ribosomal subunit protein uL16</fullName>
    </recommendedName>
    <alternativeName>
        <fullName evidence="2">50S ribosomal protein L16</fullName>
    </alternativeName>
</protein>
<evidence type="ECO:0000255" key="1">
    <source>
        <dbReference type="HAMAP-Rule" id="MF_01342"/>
    </source>
</evidence>
<evidence type="ECO:0000305" key="2"/>
<dbReference type="EMBL" id="CP000776">
    <property type="protein sequence ID" value="ABS51616.1"/>
    <property type="molecule type" value="Genomic_DNA"/>
</dbReference>
<dbReference type="RefSeq" id="WP_011991551.1">
    <property type="nucleotide sequence ID" value="NC_009714.1"/>
</dbReference>
<dbReference type="SMR" id="A7HZL3"/>
<dbReference type="STRING" id="360107.CHAB381_0091"/>
<dbReference type="KEGG" id="cha:CHAB381_0091"/>
<dbReference type="eggNOG" id="COG0197">
    <property type="taxonomic scope" value="Bacteria"/>
</dbReference>
<dbReference type="HOGENOM" id="CLU_078858_2_1_7"/>
<dbReference type="OrthoDB" id="9802589at2"/>
<dbReference type="Proteomes" id="UP000002407">
    <property type="component" value="Chromosome"/>
</dbReference>
<dbReference type="GO" id="GO:0022625">
    <property type="term" value="C:cytosolic large ribosomal subunit"/>
    <property type="evidence" value="ECO:0007669"/>
    <property type="project" value="TreeGrafter"/>
</dbReference>
<dbReference type="GO" id="GO:0019843">
    <property type="term" value="F:rRNA binding"/>
    <property type="evidence" value="ECO:0007669"/>
    <property type="project" value="UniProtKB-UniRule"/>
</dbReference>
<dbReference type="GO" id="GO:0003735">
    <property type="term" value="F:structural constituent of ribosome"/>
    <property type="evidence" value="ECO:0007669"/>
    <property type="project" value="InterPro"/>
</dbReference>
<dbReference type="GO" id="GO:0000049">
    <property type="term" value="F:tRNA binding"/>
    <property type="evidence" value="ECO:0007669"/>
    <property type="project" value="UniProtKB-KW"/>
</dbReference>
<dbReference type="GO" id="GO:0006412">
    <property type="term" value="P:translation"/>
    <property type="evidence" value="ECO:0007669"/>
    <property type="project" value="UniProtKB-UniRule"/>
</dbReference>
<dbReference type="CDD" id="cd01433">
    <property type="entry name" value="Ribosomal_L16_L10e"/>
    <property type="match status" value="1"/>
</dbReference>
<dbReference type="FunFam" id="3.90.1170.10:FF:000001">
    <property type="entry name" value="50S ribosomal protein L16"/>
    <property type="match status" value="1"/>
</dbReference>
<dbReference type="Gene3D" id="3.90.1170.10">
    <property type="entry name" value="Ribosomal protein L10e/L16"/>
    <property type="match status" value="1"/>
</dbReference>
<dbReference type="HAMAP" id="MF_01342">
    <property type="entry name" value="Ribosomal_uL16"/>
    <property type="match status" value="1"/>
</dbReference>
<dbReference type="InterPro" id="IPR047873">
    <property type="entry name" value="Ribosomal_uL16"/>
</dbReference>
<dbReference type="InterPro" id="IPR000114">
    <property type="entry name" value="Ribosomal_uL16_bact-type"/>
</dbReference>
<dbReference type="InterPro" id="IPR016180">
    <property type="entry name" value="Ribosomal_uL16_dom"/>
</dbReference>
<dbReference type="InterPro" id="IPR036920">
    <property type="entry name" value="Ribosomal_uL16_sf"/>
</dbReference>
<dbReference type="NCBIfam" id="TIGR01164">
    <property type="entry name" value="rplP_bact"/>
    <property type="match status" value="1"/>
</dbReference>
<dbReference type="PANTHER" id="PTHR12220">
    <property type="entry name" value="50S/60S RIBOSOMAL PROTEIN L16"/>
    <property type="match status" value="1"/>
</dbReference>
<dbReference type="PANTHER" id="PTHR12220:SF13">
    <property type="entry name" value="LARGE RIBOSOMAL SUBUNIT PROTEIN UL16M"/>
    <property type="match status" value="1"/>
</dbReference>
<dbReference type="Pfam" id="PF00252">
    <property type="entry name" value="Ribosomal_L16"/>
    <property type="match status" value="1"/>
</dbReference>
<dbReference type="PRINTS" id="PR00060">
    <property type="entry name" value="RIBOSOMALL16"/>
</dbReference>
<dbReference type="SUPFAM" id="SSF54686">
    <property type="entry name" value="Ribosomal protein L16p/L10e"/>
    <property type="match status" value="1"/>
</dbReference>
<gene>
    <name evidence="1" type="primary">rplP</name>
    <name type="ordered locus">CHAB381_0091</name>
</gene>
<organism>
    <name type="scientific">Campylobacter hominis (strain ATCC BAA-381 / DSM 21671 / CCUG 45161 / LMG 19568 / NCTC 13146 / CH001A)</name>
    <dbReference type="NCBI Taxonomy" id="360107"/>
    <lineage>
        <taxon>Bacteria</taxon>
        <taxon>Pseudomonadati</taxon>
        <taxon>Campylobacterota</taxon>
        <taxon>Epsilonproteobacteria</taxon>
        <taxon>Campylobacterales</taxon>
        <taxon>Campylobacteraceae</taxon>
        <taxon>Campylobacter</taxon>
    </lineage>
</organism>
<name>RL16_CAMHC</name>
<reference key="1">
    <citation type="submission" date="2007-07" db="EMBL/GenBank/DDBJ databases">
        <title>Complete genome sequence of Campylobacter hominis ATCC BAA-381, a commensal isolated from the human gastrointestinal tract.</title>
        <authorList>
            <person name="Fouts D.E."/>
            <person name="Mongodin E.F."/>
            <person name="Puiu D."/>
            <person name="Sebastian Y."/>
            <person name="Miller W.G."/>
            <person name="Mandrell R.E."/>
            <person name="Nelson K.E."/>
        </authorList>
    </citation>
    <scope>NUCLEOTIDE SEQUENCE [LARGE SCALE GENOMIC DNA]</scope>
    <source>
        <strain>ATCC BAA-381 / DSM 21671 / CCUG 45161 / LMG 19568 / NCTC 13146 / CH001A</strain>
    </source>
</reference>